<feature type="chain" id="PRO_0000371326" description="Uridine-cytidine kinase C">
    <location>
        <begin position="1"/>
        <end position="449"/>
    </location>
</feature>
<feature type="domain" description="CYTH" evidence="3">
    <location>
        <begin position="235"/>
        <end position="401"/>
    </location>
</feature>
<feature type="binding site" evidence="2">
    <location>
        <begin position="58"/>
        <end position="65"/>
    </location>
    <ligand>
        <name>ATP</name>
        <dbReference type="ChEBI" id="CHEBI:30616"/>
    </ligand>
</feature>
<accession>Q54R62</accession>
<protein>
    <recommendedName>
        <fullName>Uridine-cytidine kinase C</fullName>
        <ecNumber>2.7.1.48</ecNumber>
    </recommendedName>
    <alternativeName>
        <fullName>Cytidine monophosphokinase C</fullName>
    </alternativeName>
    <alternativeName>
        <fullName>Uridine monophosphokinase C</fullName>
    </alternativeName>
</protein>
<reference key="1">
    <citation type="journal article" date="2005" name="Nature">
        <title>The genome of the social amoeba Dictyostelium discoideum.</title>
        <authorList>
            <person name="Eichinger L."/>
            <person name="Pachebat J.A."/>
            <person name="Gloeckner G."/>
            <person name="Rajandream M.A."/>
            <person name="Sucgang R."/>
            <person name="Berriman M."/>
            <person name="Song J."/>
            <person name="Olsen R."/>
            <person name="Szafranski K."/>
            <person name="Xu Q."/>
            <person name="Tunggal B."/>
            <person name="Kummerfeld S."/>
            <person name="Madera M."/>
            <person name="Konfortov B.A."/>
            <person name="Rivero F."/>
            <person name="Bankier A.T."/>
            <person name="Lehmann R."/>
            <person name="Hamlin N."/>
            <person name="Davies R."/>
            <person name="Gaudet P."/>
            <person name="Fey P."/>
            <person name="Pilcher K."/>
            <person name="Chen G."/>
            <person name="Saunders D."/>
            <person name="Sodergren E.J."/>
            <person name="Davis P."/>
            <person name="Kerhornou A."/>
            <person name="Nie X."/>
            <person name="Hall N."/>
            <person name="Anjard C."/>
            <person name="Hemphill L."/>
            <person name="Bason N."/>
            <person name="Farbrother P."/>
            <person name="Desany B."/>
            <person name="Just E."/>
            <person name="Morio T."/>
            <person name="Rost R."/>
            <person name="Churcher C.M."/>
            <person name="Cooper J."/>
            <person name="Haydock S."/>
            <person name="van Driessche N."/>
            <person name="Cronin A."/>
            <person name="Goodhead I."/>
            <person name="Muzny D.M."/>
            <person name="Mourier T."/>
            <person name="Pain A."/>
            <person name="Lu M."/>
            <person name="Harper D."/>
            <person name="Lindsay R."/>
            <person name="Hauser H."/>
            <person name="James K.D."/>
            <person name="Quiles M."/>
            <person name="Madan Babu M."/>
            <person name="Saito T."/>
            <person name="Buchrieser C."/>
            <person name="Wardroper A."/>
            <person name="Felder M."/>
            <person name="Thangavelu M."/>
            <person name="Johnson D."/>
            <person name="Knights A."/>
            <person name="Loulseged H."/>
            <person name="Mungall K.L."/>
            <person name="Oliver K."/>
            <person name="Price C."/>
            <person name="Quail M.A."/>
            <person name="Urushihara H."/>
            <person name="Hernandez J."/>
            <person name="Rabbinowitsch E."/>
            <person name="Steffen D."/>
            <person name="Sanders M."/>
            <person name="Ma J."/>
            <person name="Kohara Y."/>
            <person name="Sharp S."/>
            <person name="Simmonds M.N."/>
            <person name="Spiegler S."/>
            <person name="Tivey A."/>
            <person name="Sugano S."/>
            <person name="White B."/>
            <person name="Walker D."/>
            <person name="Woodward J.R."/>
            <person name="Winckler T."/>
            <person name="Tanaka Y."/>
            <person name="Shaulsky G."/>
            <person name="Schleicher M."/>
            <person name="Weinstock G.M."/>
            <person name="Rosenthal A."/>
            <person name="Cox E.C."/>
            <person name="Chisholm R.L."/>
            <person name="Gibbs R.A."/>
            <person name="Loomis W.F."/>
            <person name="Platzer M."/>
            <person name="Kay R.R."/>
            <person name="Williams J.G."/>
            <person name="Dear P.H."/>
            <person name="Noegel A.A."/>
            <person name="Barrell B.G."/>
            <person name="Kuspa A."/>
        </authorList>
    </citation>
    <scope>NUCLEOTIDE SEQUENCE [LARGE SCALE GENOMIC DNA]</scope>
    <source>
        <strain>AX4</strain>
    </source>
</reference>
<name>UCKC_DICDI</name>
<gene>
    <name type="primary">udkC</name>
    <name type="ORF">DDB_G0283371</name>
</gene>
<dbReference type="EC" id="2.7.1.48"/>
<dbReference type="EMBL" id="AAFI02000054">
    <property type="protein sequence ID" value="EAL65762.1"/>
    <property type="molecule type" value="Genomic_DNA"/>
</dbReference>
<dbReference type="RefSeq" id="XP_639121.1">
    <property type="nucleotide sequence ID" value="XM_634029.1"/>
</dbReference>
<dbReference type="SMR" id="Q54R62"/>
<dbReference type="FunCoup" id="Q54R62">
    <property type="interactions" value="43"/>
</dbReference>
<dbReference type="STRING" id="44689.Q54R62"/>
<dbReference type="PaxDb" id="44689-DDB0231239"/>
<dbReference type="EnsemblProtists" id="EAL65762">
    <property type="protein sequence ID" value="EAL65762"/>
    <property type="gene ID" value="DDB_G0283371"/>
</dbReference>
<dbReference type="GeneID" id="8624054"/>
<dbReference type="KEGG" id="ddi:DDB_G0283371"/>
<dbReference type="dictyBase" id="DDB_G0283371">
    <property type="gene designation" value="udkC"/>
</dbReference>
<dbReference type="VEuPathDB" id="AmoebaDB:DDB_G0283371"/>
<dbReference type="eggNOG" id="KOG4203">
    <property type="taxonomic scope" value="Eukaryota"/>
</dbReference>
<dbReference type="HOGENOM" id="CLU_028566_0_0_1"/>
<dbReference type="InParanoid" id="Q54R62"/>
<dbReference type="OMA" id="DGQYSIM"/>
<dbReference type="PhylomeDB" id="Q54R62"/>
<dbReference type="UniPathway" id="UPA00574">
    <property type="reaction ID" value="UER00637"/>
</dbReference>
<dbReference type="UniPathway" id="UPA00579">
    <property type="reaction ID" value="UER00640"/>
</dbReference>
<dbReference type="PRO" id="PR:Q54R62"/>
<dbReference type="Proteomes" id="UP000002195">
    <property type="component" value="Chromosome 4"/>
</dbReference>
<dbReference type="GO" id="GO:0005737">
    <property type="term" value="C:cytoplasm"/>
    <property type="evidence" value="ECO:0000318"/>
    <property type="project" value="GO_Central"/>
</dbReference>
<dbReference type="GO" id="GO:0005524">
    <property type="term" value="F:ATP binding"/>
    <property type="evidence" value="ECO:0007669"/>
    <property type="project" value="UniProtKB-KW"/>
</dbReference>
<dbReference type="GO" id="GO:0043771">
    <property type="term" value="F:cytidine kinase activity"/>
    <property type="evidence" value="ECO:0007669"/>
    <property type="project" value="RHEA"/>
</dbReference>
<dbReference type="GO" id="GO:0016462">
    <property type="term" value="F:pyrophosphatase activity"/>
    <property type="evidence" value="ECO:0007669"/>
    <property type="project" value="UniProtKB-ARBA"/>
</dbReference>
<dbReference type="GO" id="GO:0004849">
    <property type="term" value="F:uridine kinase activity"/>
    <property type="evidence" value="ECO:0007669"/>
    <property type="project" value="UniProtKB-EC"/>
</dbReference>
<dbReference type="GO" id="GO:0044211">
    <property type="term" value="P:CTP salvage"/>
    <property type="evidence" value="ECO:0007669"/>
    <property type="project" value="UniProtKB-UniPathway"/>
</dbReference>
<dbReference type="GO" id="GO:0044206">
    <property type="term" value="P:UMP salvage"/>
    <property type="evidence" value="ECO:0007669"/>
    <property type="project" value="UniProtKB-UniPathway"/>
</dbReference>
<dbReference type="CDD" id="cd02028">
    <property type="entry name" value="UMPK_like"/>
    <property type="match status" value="1"/>
</dbReference>
<dbReference type="Gene3D" id="2.40.320.10">
    <property type="entry name" value="Hypothetical Protein Pfu-838710-001"/>
    <property type="match status" value="1"/>
</dbReference>
<dbReference type="Gene3D" id="3.40.50.300">
    <property type="entry name" value="P-loop containing nucleotide triphosphate hydrolases"/>
    <property type="match status" value="1"/>
</dbReference>
<dbReference type="InterPro" id="IPR033469">
    <property type="entry name" value="CYTH-like_dom_sf"/>
</dbReference>
<dbReference type="InterPro" id="IPR023577">
    <property type="entry name" value="CYTH_domain"/>
</dbReference>
<dbReference type="InterPro" id="IPR027417">
    <property type="entry name" value="P-loop_NTPase"/>
</dbReference>
<dbReference type="InterPro" id="IPR006083">
    <property type="entry name" value="PRK/URK"/>
</dbReference>
<dbReference type="PANTHER" id="PTHR10285">
    <property type="entry name" value="URIDINE KINASE"/>
    <property type="match status" value="1"/>
</dbReference>
<dbReference type="Pfam" id="PF01928">
    <property type="entry name" value="CYTH"/>
    <property type="match status" value="1"/>
</dbReference>
<dbReference type="Pfam" id="PF00485">
    <property type="entry name" value="PRK"/>
    <property type="match status" value="1"/>
</dbReference>
<dbReference type="PRINTS" id="PR00988">
    <property type="entry name" value="URIDINKINASE"/>
</dbReference>
<dbReference type="SUPFAM" id="SSF55154">
    <property type="entry name" value="CYTH-like phosphatases"/>
    <property type="match status" value="1"/>
</dbReference>
<dbReference type="SUPFAM" id="SSF52540">
    <property type="entry name" value="P-loop containing nucleoside triphosphate hydrolases"/>
    <property type="match status" value="1"/>
</dbReference>
<dbReference type="PROSITE" id="PS51707">
    <property type="entry name" value="CYTH"/>
    <property type="match status" value="1"/>
</dbReference>
<keyword id="KW-0067">ATP-binding</keyword>
<keyword id="KW-0418">Kinase</keyword>
<keyword id="KW-0547">Nucleotide-binding</keyword>
<keyword id="KW-1185">Reference proteome</keyword>
<keyword id="KW-0808">Transferase</keyword>
<evidence type="ECO:0000250" key="1"/>
<evidence type="ECO:0000255" key="2"/>
<evidence type="ECO:0000255" key="3">
    <source>
        <dbReference type="PROSITE-ProRule" id="PRU01044"/>
    </source>
</evidence>
<evidence type="ECO:0000305" key="4"/>
<organism>
    <name type="scientific">Dictyostelium discoideum</name>
    <name type="common">Social amoeba</name>
    <dbReference type="NCBI Taxonomy" id="44689"/>
    <lineage>
        <taxon>Eukaryota</taxon>
        <taxon>Amoebozoa</taxon>
        <taxon>Evosea</taxon>
        <taxon>Eumycetozoa</taxon>
        <taxon>Dictyostelia</taxon>
        <taxon>Dictyosteliales</taxon>
        <taxon>Dictyosteliaceae</taxon>
        <taxon>Dictyostelium</taxon>
    </lineage>
</organism>
<sequence>MDSLEIEVIPRPDKDDRYTIKPLKDTLSFDKGFFLAVRAIQSIRKKSQGSVIVVGIAGPSGAGKTSIAQKIVSVLPKSILISLDNYLDSSRQIIEENYDDYRLVDFELLKKNISDLISNKPTDLPLYDFTKSGRYAYKRVQPPESKVLLIEGIYALHEEIRHLLDLRVSISGGVHFDLIKRIFRDVHRTGQQPHESLQQITDTVYPMYKAFIEPDLQLAEIQVVNKFNPFGGLLNPIYILKSVKQGVTVDMIHSVLNKSTIQENTARYYDIYLIPPNTTFANSSSCDWIRVRNADGQYSIMFSEEIKEGPFIISPRVDFVVGVNMLGGLMSLGYQMVAIIHRKSTIFKDGKIIISYDELEELGQTFVQIKGFDATSVQEAGKKLGLENNYLQKSYIELYQDKYKKSLSDNSTVTTLPIGGINNNNTINNNNNNNNNNNLSLSNFINSKL</sequence>
<comment type="function">
    <text evidence="1">Catalyzes the conversion of uridine into uridine monophosphate and cytidine into cytidine monophosphate in the pyrimidine salvage pathway.</text>
</comment>
<comment type="catalytic activity">
    <reaction>
        <text>uridine + ATP = UMP + ADP + H(+)</text>
        <dbReference type="Rhea" id="RHEA:16825"/>
        <dbReference type="ChEBI" id="CHEBI:15378"/>
        <dbReference type="ChEBI" id="CHEBI:16704"/>
        <dbReference type="ChEBI" id="CHEBI:30616"/>
        <dbReference type="ChEBI" id="CHEBI:57865"/>
        <dbReference type="ChEBI" id="CHEBI:456216"/>
        <dbReference type="EC" id="2.7.1.48"/>
    </reaction>
</comment>
<comment type="catalytic activity">
    <reaction>
        <text>cytidine + ATP = CMP + ADP + H(+)</text>
        <dbReference type="Rhea" id="RHEA:24674"/>
        <dbReference type="ChEBI" id="CHEBI:15378"/>
        <dbReference type="ChEBI" id="CHEBI:17562"/>
        <dbReference type="ChEBI" id="CHEBI:30616"/>
        <dbReference type="ChEBI" id="CHEBI:60377"/>
        <dbReference type="ChEBI" id="CHEBI:456216"/>
        <dbReference type="EC" id="2.7.1.48"/>
    </reaction>
</comment>
<comment type="pathway">
    <text>Pyrimidine metabolism; CTP biosynthesis via salvage pathway; CTP from cytidine: step 1/3.</text>
</comment>
<comment type="pathway">
    <text>Pyrimidine metabolism; UMP biosynthesis via salvage pathway; UMP from uridine: step 1/1.</text>
</comment>
<comment type="similarity">
    <text evidence="4">Belongs to the uridine kinase family.</text>
</comment>
<proteinExistence type="inferred from homology"/>